<reference key="1">
    <citation type="journal article" date="2002" name="Nature">
        <title>The genome sequence and structure of rice chromosome 1.</title>
        <authorList>
            <person name="Sasaki T."/>
            <person name="Matsumoto T."/>
            <person name="Yamamoto K."/>
            <person name="Sakata K."/>
            <person name="Baba T."/>
            <person name="Katayose Y."/>
            <person name="Wu J."/>
            <person name="Niimura Y."/>
            <person name="Cheng Z."/>
            <person name="Nagamura Y."/>
            <person name="Antonio B.A."/>
            <person name="Kanamori H."/>
            <person name="Hosokawa S."/>
            <person name="Masukawa M."/>
            <person name="Arikawa K."/>
            <person name="Chiden Y."/>
            <person name="Hayashi M."/>
            <person name="Okamoto M."/>
            <person name="Ando T."/>
            <person name="Aoki H."/>
            <person name="Arita K."/>
            <person name="Hamada M."/>
            <person name="Harada C."/>
            <person name="Hijishita S."/>
            <person name="Honda M."/>
            <person name="Ichikawa Y."/>
            <person name="Idonuma A."/>
            <person name="Iijima M."/>
            <person name="Ikeda M."/>
            <person name="Ikeno M."/>
            <person name="Ito S."/>
            <person name="Ito T."/>
            <person name="Ito Y."/>
            <person name="Ito Y."/>
            <person name="Iwabuchi A."/>
            <person name="Kamiya K."/>
            <person name="Karasawa W."/>
            <person name="Katagiri S."/>
            <person name="Kikuta A."/>
            <person name="Kobayashi N."/>
            <person name="Kono I."/>
            <person name="Machita K."/>
            <person name="Maehara T."/>
            <person name="Mizuno H."/>
            <person name="Mizubayashi T."/>
            <person name="Mukai Y."/>
            <person name="Nagasaki H."/>
            <person name="Nakashima M."/>
            <person name="Nakama Y."/>
            <person name="Nakamichi Y."/>
            <person name="Nakamura M."/>
            <person name="Namiki N."/>
            <person name="Negishi M."/>
            <person name="Ohta I."/>
            <person name="Ono N."/>
            <person name="Saji S."/>
            <person name="Sakai K."/>
            <person name="Shibata M."/>
            <person name="Shimokawa T."/>
            <person name="Shomura A."/>
            <person name="Song J."/>
            <person name="Takazaki Y."/>
            <person name="Terasawa K."/>
            <person name="Tsuji K."/>
            <person name="Waki K."/>
            <person name="Yamagata H."/>
            <person name="Yamane H."/>
            <person name="Yoshiki S."/>
            <person name="Yoshihara R."/>
            <person name="Yukawa K."/>
            <person name="Zhong H."/>
            <person name="Iwama H."/>
            <person name="Endo T."/>
            <person name="Ito H."/>
            <person name="Hahn J.H."/>
            <person name="Kim H.-I."/>
            <person name="Eun M.-Y."/>
            <person name="Yano M."/>
            <person name="Jiang J."/>
            <person name="Gojobori T."/>
        </authorList>
    </citation>
    <scope>NUCLEOTIDE SEQUENCE [LARGE SCALE GENOMIC DNA]</scope>
    <source>
        <strain>cv. Nipponbare</strain>
    </source>
</reference>
<reference key="2">
    <citation type="journal article" date="2005" name="Nature">
        <title>The map-based sequence of the rice genome.</title>
        <authorList>
            <consortium name="International rice genome sequencing project (IRGSP)"/>
        </authorList>
    </citation>
    <scope>NUCLEOTIDE SEQUENCE [LARGE SCALE GENOMIC DNA]</scope>
    <source>
        <strain>cv. Nipponbare</strain>
    </source>
</reference>
<reference key="3">
    <citation type="journal article" date="2008" name="Nucleic Acids Res.">
        <title>The rice annotation project database (RAP-DB): 2008 update.</title>
        <authorList>
            <consortium name="The rice annotation project (RAP)"/>
        </authorList>
    </citation>
    <scope>GENOME REANNOTATION</scope>
    <source>
        <strain>cv. Nipponbare</strain>
    </source>
</reference>
<reference key="4">
    <citation type="journal article" date="2013" name="Rice">
        <title>Improvement of the Oryza sativa Nipponbare reference genome using next generation sequence and optical map data.</title>
        <authorList>
            <person name="Kawahara Y."/>
            <person name="de la Bastide M."/>
            <person name="Hamilton J.P."/>
            <person name="Kanamori H."/>
            <person name="McCombie W.R."/>
            <person name="Ouyang S."/>
            <person name="Schwartz D.C."/>
            <person name="Tanaka T."/>
            <person name="Wu J."/>
            <person name="Zhou S."/>
            <person name="Childs K.L."/>
            <person name="Davidson R.M."/>
            <person name="Lin H."/>
            <person name="Quesada-Ocampo L."/>
            <person name="Vaillancourt B."/>
            <person name="Sakai H."/>
            <person name="Lee S.S."/>
            <person name="Kim J."/>
            <person name="Numa H."/>
            <person name="Itoh T."/>
            <person name="Buell C.R."/>
            <person name="Matsumoto T."/>
        </authorList>
    </citation>
    <scope>GENOME REANNOTATION</scope>
    <source>
        <strain>cv. Nipponbare</strain>
    </source>
</reference>
<reference key="5">
    <citation type="journal article" date="2005" name="PLoS Biol.">
        <title>The genomes of Oryza sativa: a history of duplications.</title>
        <authorList>
            <person name="Yu J."/>
            <person name="Wang J."/>
            <person name="Lin W."/>
            <person name="Li S."/>
            <person name="Li H."/>
            <person name="Zhou J."/>
            <person name="Ni P."/>
            <person name="Dong W."/>
            <person name="Hu S."/>
            <person name="Zeng C."/>
            <person name="Zhang J."/>
            <person name="Zhang Y."/>
            <person name="Li R."/>
            <person name="Xu Z."/>
            <person name="Li S."/>
            <person name="Li X."/>
            <person name="Zheng H."/>
            <person name="Cong L."/>
            <person name="Lin L."/>
            <person name="Yin J."/>
            <person name="Geng J."/>
            <person name="Li G."/>
            <person name="Shi J."/>
            <person name="Liu J."/>
            <person name="Lv H."/>
            <person name="Li J."/>
            <person name="Wang J."/>
            <person name="Deng Y."/>
            <person name="Ran L."/>
            <person name="Shi X."/>
            <person name="Wang X."/>
            <person name="Wu Q."/>
            <person name="Li C."/>
            <person name="Ren X."/>
            <person name="Wang J."/>
            <person name="Wang X."/>
            <person name="Li D."/>
            <person name="Liu D."/>
            <person name="Zhang X."/>
            <person name="Ji Z."/>
            <person name="Zhao W."/>
            <person name="Sun Y."/>
            <person name="Zhang Z."/>
            <person name="Bao J."/>
            <person name="Han Y."/>
            <person name="Dong L."/>
            <person name="Ji J."/>
            <person name="Chen P."/>
            <person name="Wu S."/>
            <person name="Liu J."/>
            <person name="Xiao Y."/>
            <person name="Bu D."/>
            <person name="Tan J."/>
            <person name="Yang L."/>
            <person name="Ye C."/>
            <person name="Zhang J."/>
            <person name="Xu J."/>
            <person name="Zhou Y."/>
            <person name="Yu Y."/>
            <person name="Zhang B."/>
            <person name="Zhuang S."/>
            <person name="Wei H."/>
            <person name="Liu B."/>
            <person name="Lei M."/>
            <person name="Yu H."/>
            <person name="Li Y."/>
            <person name="Xu H."/>
            <person name="Wei S."/>
            <person name="He X."/>
            <person name="Fang L."/>
            <person name="Zhang Z."/>
            <person name="Zhang Y."/>
            <person name="Huang X."/>
            <person name="Su Z."/>
            <person name="Tong W."/>
            <person name="Li J."/>
            <person name="Tong Z."/>
            <person name="Li S."/>
            <person name="Ye J."/>
            <person name="Wang L."/>
            <person name="Fang L."/>
            <person name="Lei T."/>
            <person name="Chen C.-S."/>
            <person name="Chen H.-C."/>
            <person name="Xu Z."/>
            <person name="Li H."/>
            <person name="Huang H."/>
            <person name="Zhang F."/>
            <person name="Xu H."/>
            <person name="Li N."/>
            <person name="Zhao C."/>
            <person name="Li S."/>
            <person name="Dong L."/>
            <person name="Huang Y."/>
            <person name="Li L."/>
            <person name="Xi Y."/>
            <person name="Qi Q."/>
            <person name="Li W."/>
            <person name="Zhang B."/>
            <person name="Hu W."/>
            <person name="Zhang Y."/>
            <person name="Tian X."/>
            <person name="Jiao Y."/>
            <person name="Liang X."/>
            <person name="Jin J."/>
            <person name="Gao L."/>
            <person name="Zheng W."/>
            <person name="Hao B."/>
            <person name="Liu S.-M."/>
            <person name="Wang W."/>
            <person name="Yuan L."/>
            <person name="Cao M."/>
            <person name="McDermott J."/>
            <person name="Samudrala R."/>
            <person name="Wang J."/>
            <person name="Wong G.K.-S."/>
            <person name="Yang H."/>
        </authorList>
    </citation>
    <scope>NUCLEOTIDE SEQUENCE [LARGE SCALE GENOMIC DNA]</scope>
    <source>
        <strain>cv. Nipponbare</strain>
    </source>
</reference>
<reference key="6">
    <citation type="journal article" date="2003" name="Science">
        <title>Collection, mapping, and annotation of over 28,000 cDNA clones from japonica rice.</title>
        <authorList>
            <consortium name="The rice full-length cDNA consortium"/>
        </authorList>
    </citation>
    <scope>NUCLEOTIDE SEQUENCE [LARGE SCALE MRNA]</scope>
    <source>
        <strain>cv. Nipponbare</strain>
    </source>
</reference>
<sequence length="391" mass="44793">MGSRGRRGGGERETETEEDETWKLRVGDDFTVPERFHRKPPFFSRIFPAGSHGKHRKIAKYYKKQENLLKDFSEMETMNEIGSLDQNAPTEEELRQMAKGERLAINLSNIINLILFIGKVLASVESLSMAVIASTLDSLLDLLSGFILWFTAHAMKKPNKYSYPIGKRRMQPVGIIVFASVMGTLGFQVLIESGRQLITNEHQVFDHRKELWMIGSMSSVAVVKFFLMLYCRSFKNEIVRAYAQDHFFDVITNSVGLVSALLAVRYKWWMDPVGAILIAVYTITTWARTVVENVGTLIGRSAPAEYLTKLTYLIWNHHEEIRHIDTVRAYTFGTHYFVEVDIVLPGDMPLSHAHDIGESLQEKLEQLPEVERAFVHVDFEFTHRPEHKAEV</sequence>
<comment type="function">
    <text evidence="1">Involved in sequestration of excess metal in the cytoplasm into vacuoles to maintain metal homeostasis.</text>
</comment>
<comment type="subcellular location">
    <subcellularLocation>
        <location evidence="1">Vacuole membrane</location>
        <topology evidence="1">Multi-pass membrane protein</topology>
    </subcellularLocation>
    <text>Tonoplast.</text>
</comment>
<comment type="similarity">
    <text evidence="4">Belongs to the cation diffusion facilitator (CDF) transporter (TC 2.A.4) family. SLC30A subfamily.</text>
</comment>
<accession>Q9LDU0</accession>
<accession>A0A0P0UXS7</accession>
<protein>
    <recommendedName>
        <fullName>Metal tolerance protein 7</fullName>
        <shortName>OsMTP7</shortName>
    </recommendedName>
</protein>
<evidence type="ECO:0000250" key="1"/>
<evidence type="ECO:0000255" key="2"/>
<evidence type="ECO:0000256" key="3">
    <source>
        <dbReference type="SAM" id="MobiDB-lite"/>
    </source>
</evidence>
<evidence type="ECO:0000305" key="4"/>
<keyword id="KW-0406">Ion transport</keyword>
<keyword id="KW-0472">Membrane</keyword>
<keyword id="KW-1185">Reference proteome</keyword>
<keyword id="KW-0812">Transmembrane</keyword>
<keyword id="KW-1133">Transmembrane helix</keyword>
<keyword id="KW-0813">Transport</keyword>
<keyword id="KW-0926">Vacuole</keyword>
<dbReference type="EMBL" id="AP002526">
    <property type="protein sequence ID" value="BAA99362.1"/>
    <property type="molecule type" value="Genomic_DNA"/>
</dbReference>
<dbReference type="EMBL" id="AP002538">
    <property type="protein sequence ID" value="BAB03393.1"/>
    <property type="molecule type" value="Genomic_DNA"/>
</dbReference>
<dbReference type="EMBL" id="AP008207">
    <property type="protein sequence ID" value="BAF03834.1"/>
    <property type="molecule type" value="Genomic_DNA"/>
</dbReference>
<dbReference type="EMBL" id="AP014957">
    <property type="protein sequence ID" value="BAS70205.1"/>
    <property type="molecule type" value="Genomic_DNA"/>
</dbReference>
<dbReference type="EMBL" id="CM000138">
    <property type="protein sequence ID" value="EEE53807.1"/>
    <property type="molecule type" value="Genomic_DNA"/>
</dbReference>
<dbReference type="EMBL" id="AK061853">
    <property type="protein sequence ID" value="BAG88147.1"/>
    <property type="molecule type" value="mRNA"/>
</dbReference>
<dbReference type="RefSeq" id="XP_015621370.1">
    <property type="nucleotide sequence ID" value="XM_015765884.1"/>
</dbReference>
<dbReference type="SMR" id="Q9LDU0"/>
<dbReference type="FunCoup" id="Q9LDU0">
    <property type="interactions" value="25"/>
</dbReference>
<dbReference type="STRING" id="39947.Q9LDU0"/>
<dbReference type="PaxDb" id="39947-Q9LDU0"/>
<dbReference type="EnsemblPlants" id="Os01t0130000-01">
    <property type="protein sequence ID" value="Os01t0130000-01"/>
    <property type="gene ID" value="Os01g0130000"/>
</dbReference>
<dbReference type="Gramene" id="Os01t0130000-01">
    <property type="protein sequence ID" value="Os01t0130000-01"/>
    <property type="gene ID" value="Os01g0130000"/>
</dbReference>
<dbReference type="KEGG" id="dosa:Os01g0130000"/>
<dbReference type="eggNOG" id="KOG1485">
    <property type="taxonomic scope" value="Eukaryota"/>
</dbReference>
<dbReference type="InParanoid" id="Q9LDU0"/>
<dbReference type="OMA" id="QKVDTCR"/>
<dbReference type="OrthoDB" id="78296at2759"/>
<dbReference type="Proteomes" id="UP000000763">
    <property type="component" value="Chromosome 1"/>
</dbReference>
<dbReference type="Proteomes" id="UP000007752">
    <property type="component" value="Chromosome 1"/>
</dbReference>
<dbReference type="Proteomes" id="UP000059680">
    <property type="component" value="Chromosome 1"/>
</dbReference>
<dbReference type="ExpressionAtlas" id="Q9LDU0">
    <property type="expression patterns" value="baseline and differential"/>
</dbReference>
<dbReference type="GO" id="GO:0016020">
    <property type="term" value="C:membrane"/>
    <property type="evidence" value="ECO:0000318"/>
    <property type="project" value="GO_Central"/>
</dbReference>
<dbReference type="GO" id="GO:0005774">
    <property type="term" value="C:vacuolar membrane"/>
    <property type="evidence" value="ECO:0007669"/>
    <property type="project" value="UniProtKB-SubCell"/>
</dbReference>
<dbReference type="GO" id="GO:0008324">
    <property type="term" value="F:monoatomic cation transmembrane transporter activity"/>
    <property type="evidence" value="ECO:0000318"/>
    <property type="project" value="GO_Central"/>
</dbReference>
<dbReference type="FunFam" id="1.20.1510.10:FF:000003">
    <property type="entry name" value="Metal tolerance protein 11"/>
    <property type="match status" value="1"/>
</dbReference>
<dbReference type="FunFam" id="3.30.70.1350:FF:000001">
    <property type="entry name" value="Metal tolerance protein 11"/>
    <property type="match status" value="1"/>
</dbReference>
<dbReference type="Gene3D" id="1.20.1510.10">
    <property type="entry name" value="Cation efflux protein transmembrane domain"/>
    <property type="match status" value="1"/>
</dbReference>
<dbReference type="Gene3D" id="3.30.70.1350">
    <property type="entry name" value="Cation efflux protein, cytoplasmic domain"/>
    <property type="match status" value="1"/>
</dbReference>
<dbReference type="InterPro" id="IPR002524">
    <property type="entry name" value="Cation_efflux"/>
</dbReference>
<dbReference type="InterPro" id="IPR027470">
    <property type="entry name" value="Cation_efflux_CTD"/>
</dbReference>
<dbReference type="InterPro" id="IPR036837">
    <property type="entry name" value="Cation_efflux_CTD_sf"/>
</dbReference>
<dbReference type="InterPro" id="IPR027469">
    <property type="entry name" value="Cation_efflux_TMD_sf"/>
</dbReference>
<dbReference type="InterPro" id="IPR050291">
    <property type="entry name" value="CDF_Transporter"/>
</dbReference>
<dbReference type="NCBIfam" id="TIGR01297">
    <property type="entry name" value="CDF"/>
    <property type="match status" value="1"/>
</dbReference>
<dbReference type="PANTHER" id="PTHR43840:SF2">
    <property type="entry name" value="METAL TOLERANCE PROTEIN 9"/>
    <property type="match status" value="1"/>
</dbReference>
<dbReference type="PANTHER" id="PTHR43840">
    <property type="entry name" value="MITOCHONDRIAL METAL TRANSPORTER 1-RELATED"/>
    <property type="match status" value="1"/>
</dbReference>
<dbReference type="Pfam" id="PF01545">
    <property type="entry name" value="Cation_efflux"/>
    <property type="match status" value="1"/>
</dbReference>
<dbReference type="Pfam" id="PF16916">
    <property type="entry name" value="ZT_dimer"/>
    <property type="match status" value="1"/>
</dbReference>
<dbReference type="SUPFAM" id="SSF160240">
    <property type="entry name" value="Cation efflux protein cytoplasmic domain-like"/>
    <property type="match status" value="1"/>
</dbReference>
<dbReference type="SUPFAM" id="SSF161111">
    <property type="entry name" value="Cation efflux protein transmembrane domain-like"/>
    <property type="match status" value="1"/>
</dbReference>
<name>MTP7_ORYSJ</name>
<gene>
    <name type="primary">MTP7</name>
    <name type="ordered locus">Os01g0130000</name>
    <name type="ordered locus">LOC_Os01g03914</name>
    <name type="ORF">OsJ_00239</name>
    <name type="ORF">P0408F06.28</name>
    <name type="ORF">P0504H10.3</name>
</gene>
<proteinExistence type="evidence at transcript level"/>
<feature type="chain" id="PRO_0000400015" description="Metal tolerance protein 7">
    <location>
        <begin position="1"/>
        <end position="391"/>
    </location>
</feature>
<feature type="topological domain" description="Cytoplasmic" evidence="2">
    <location>
        <begin position="1"/>
        <end position="103"/>
    </location>
</feature>
<feature type="transmembrane region" description="Helical" evidence="2">
    <location>
        <begin position="104"/>
        <end position="124"/>
    </location>
</feature>
<feature type="topological domain" description="Vacuolar" evidence="2">
    <location>
        <begin position="125"/>
        <end position="134"/>
    </location>
</feature>
<feature type="transmembrane region" description="Helical" evidence="2">
    <location>
        <begin position="135"/>
        <end position="155"/>
    </location>
</feature>
<feature type="topological domain" description="Cytoplasmic" evidence="2">
    <location>
        <begin position="156"/>
        <end position="171"/>
    </location>
</feature>
<feature type="transmembrane region" description="Helical" evidence="2">
    <location>
        <begin position="172"/>
        <end position="192"/>
    </location>
</feature>
<feature type="topological domain" description="Vacuolar" evidence="2">
    <location>
        <begin position="193"/>
        <end position="210"/>
    </location>
</feature>
<feature type="transmembrane region" description="Helical" evidence="2">
    <location>
        <begin position="211"/>
        <end position="231"/>
    </location>
</feature>
<feature type="topological domain" description="Cytoplasmic" evidence="2">
    <location>
        <begin position="232"/>
        <end position="246"/>
    </location>
</feature>
<feature type="transmembrane region" description="Helical" evidence="2">
    <location>
        <begin position="247"/>
        <end position="264"/>
    </location>
</feature>
<feature type="topological domain" description="Vacuolar" evidence="2">
    <location>
        <begin position="265"/>
        <end position="266"/>
    </location>
</feature>
<feature type="transmembrane region" description="Helical" evidence="2">
    <location>
        <begin position="267"/>
        <end position="287"/>
    </location>
</feature>
<feature type="topological domain" description="Cytoplasmic" evidence="2">
    <location>
        <begin position="288"/>
        <end position="391"/>
    </location>
</feature>
<feature type="region of interest" description="Disordered" evidence="3">
    <location>
        <begin position="1"/>
        <end position="21"/>
    </location>
</feature>
<organism>
    <name type="scientific">Oryza sativa subsp. japonica</name>
    <name type="common">Rice</name>
    <dbReference type="NCBI Taxonomy" id="39947"/>
    <lineage>
        <taxon>Eukaryota</taxon>
        <taxon>Viridiplantae</taxon>
        <taxon>Streptophyta</taxon>
        <taxon>Embryophyta</taxon>
        <taxon>Tracheophyta</taxon>
        <taxon>Spermatophyta</taxon>
        <taxon>Magnoliopsida</taxon>
        <taxon>Liliopsida</taxon>
        <taxon>Poales</taxon>
        <taxon>Poaceae</taxon>
        <taxon>BOP clade</taxon>
        <taxon>Oryzoideae</taxon>
        <taxon>Oryzeae</taxon>
        <taxon>Oryzinae</taxon>
        <taxon>Oryza</taxon>
        <taxon>Oryza sativa</taxon>
    </lineage>
</organism>